<dbReference type="EC" id="5.4.99.25" evidence="1"/>
<dbReference type="EMBL" id="AE009949">
    <property type="protein sequence ID" value="AAL97815.1"/>
    <property type="molecule type" value="Genomic_DNA"/>
</dbReference>
<dbReference type="RefSeq" id="WP_002989678.1">
    <property type="nucleotide sequence ID" value="NC_003485.1"/>
</dbReference>
<dbReference type="SMR" id="P65859"/>
<dbReference type="GeneID" id="69900784"/>
<dbReference type="KEGG" id="spm:spyM18_1200"/>
<dbReference type="HOGENOM" id="CLU_032087_0_1_9"/>
<dbReference type="GO" id="GO:0003723">
    <property type="term" value="F:RNA binding"/>
    <property type="evidence" value="ECO:0007669"/>
    <property type="project" value="InterPro"/>
</dbReference>
<dbReference type="GO" id="GO:0160148">
    <property type="term" value="F:tRNA pseudouridine(55) synthase activity"/>
    <property type="evidence" value="ECO:0007669"/>
    <property type="project" value="UniProtKB-EC"/>
</dbReference>
<dbReference type="GO" id="GO:1990481">
    <property type="term" value="P:mRNA pseudouridine synthesis"/>
    <property type="evidence" value="ECO:0007669"/>
    <property type="project" value="TreeGrafter"/>
</dbReference>
<dbReference type="GO" id="GO:0031119">
    <property type="term" value="P:tRNA pseudouridine synthesis"/>
    <property type="evidence" value="ECO:0007669"/>
    <property type="project" value="UniProtKB-UniRule"/>
</dbReference>
<dbReference type="CDD" id="cd02573">
    <property type="entry name" value="PseudoU_synth_EcTruB"/>
    <property type="match status" value="1"/>
</dbReference>
<dbReference type="FunFam" id="3.30.2350.10:FF:000011">
    <property type="entry name" value="tRNA pseudouridine synthase B"/>
    <property type="match status" value="1"/>
</dbReference>
<dbReference type="Gene3D" id="3.30.2350.10">
    <property type="entry name" value="Pseudouridine synthase"/>
    <property type="match status" value="1"/>
</dbReference>
<dbReference type="HAMAP" id="MF_01080">
    <property type="entry name" value="TruB_bact"/>
    <property type="match status" value="1"/>
</dbReference>
<dbReference type="InterPro" id="IPR020103">
    <property type="entry name" value="PsdUridine_synth_cat_dom_sf"/>
</dbReference>
<dbReference type="InterPro" id="IPR002501">
    <property type="entry name" value="PsdUridine_synth_N"/>
</dbReference>
<dbReference type="InterPro" id="IPR014780">
    <property type="entry name" value="tRNA_psdUridine_synth_TruB"/>
</dbReference>
<dbReference type="InterPro" id="IPR032819">
    <property type="entry name" value="TruB_C"/>
</dbReference>
<dbReference type="NCBIfam" id="TIGR00431">
    <property type="entry name" value="TruB"/>
    <property type="match status" value="1"/>
</dbReference>
<dbReference type="PANTHER" id="PTHR13767:SF2">
    <property type="entry name" value="PSEUDOURIDYLATE SYNTHASE TRUB1"/>
    <property type="match status" value="1"/>
</dbReference>
<dbReference type="PANTHER" id="PTHR13767">
    <property type="entry name" value="TRNA-PSEUDOURIDINE SYNTHASE"/>
    <property type="match status" value="1"/>
</dbReference>
<dbReference type="Pfam" id="PF16198">
    <property type="entry name" value="TruB_C_2"/>
    <property type="match status" value="1"/>
</dbReference>
<dbReference type="Pfam" id="PF01509">
    <property type="entry name" value="TruB_N"/>
    <property type="match status" value="1"/>
</dbReference>
<dbReference type="SUPFAM" id="SSF55120">
    <property type="entry name" value="Pseudouridine synthase"/>
    <property type="match status" value="1"/>
</dbReference>
<gene>
    <name evidence="1" type="primary">truB</name>
    <name type="ordered locus">spyM18_1200</name>
</gene>
<organism>
    <name type="scientific">Streptococcus pyogenes serotype M18 (strain MGAS8232)</name>
    <dbReference type="NCBI Taxonomy" id="186103"/>
    <lineage>
        <taxon>Bacteria</taxon>
        <taxon>Bacillati</taxon>
        <taxon>Bacillota</taxon>
        <taxon>Bacilli</taxon>
        <taxon>Lactobacillales</taxon>
        <taxon>Streptococcaceae</taxon>
        <taxon>Streptococcus</taxon>
    </lineage>
</organism>
<name>TRUB_STRP8</name>
<feature type="chain" id="PRO_0000121920" description="tRNA pseudouridine synthase B">
    <location>
        <begin position="1"/>
        <end position="294"/>
    </location>
</feature>
<feature type="active site" description="Nucleophile" evidence="1">
    <location>
        <position position="39"/>
    </location>
</feature>
<reference key="1">
    <citation type="journal article" date="2002" name="Proc. Natl. Acad. Sci. U.S.A.">
        <title>Genome sequence and comparative microarray analysis of serotype M18 group A Streptococcus strains associated with acute rheumatic fever outbreaks.</title>
        <authorList>
            <person name="Smoot J.C."/>
            <person name="Barbian K.D."/>
            <person name="Van Gompel J.J."/>
            <person name="Smoot L.M."/>
            <person name="Chaussee M.S."/>
            <person name="Sylva G.L."/>
            <person name="Sturdevant D.E."/>
            <person name="Ricklefs S.M."/>
            <person name="Porcella S.F."/>
            <person name="Parkins L.D."/>
            <person name="Beres S.B."/>
            <person name="Campbell D.S."/>
            <person name="Smith T.M."/>
            <person name="Zhang Q."/>
            <person name="Kapur V."/>
            <person name="Daly J.A."/>
            <person name="Veasy L.G."/>
            <person name="Musser J.M."/>
        </authorList>
    </citation>
    <scope>NUCLEOTIDE SEQUENCE [LARGE SCALE GENOMIC DNA]</scope>
    <source>
        <strain>MGAS8232</strain>
    </source>
</reference>
<sequence length="294" mass="32345">MINGIINLKKEAGMTSHDAVFKLRKLLQEKKIGHGGTLDPDVVGVLPIAVGKATRVIEYMTEAGKVYEGQVTLGYSTTTEDASGEVVARSSLPAVLTEELVDQTMTTFLGKITQTPPMYSAVKVNGRKLYEYARAGESVERPRREVTISLFERTSPLNFTEDGLCRFSFKVACSKGTYVRTLAVDLGRALGVESHMSFLQRSASAGLTLETAYTLGEIADMVSKQEMSFLLPIEYGVADLPKMVIDDTELTEISFGRRLSLPSQEPLLAAFHGEKVIAILEKRDQEYKPKKVLI</sequence>
<keyword id="KW-0413">Isomerase</keyword>
<keyword id="KW-0819">tRNA processing</keyword>
<accession>P65859</accession>
<accession>Q99ZF5</accession>
<comment type="function">
    <text evidence="1">Responsible for synthesis of pseudouridine from uracil-55 in the psi GC loop of transfer RNAs.</text>
</comment>
<comment type="catalytic activity">
    <reaction evidence="1">
        <text>uridine(55) in tRNA = pseudouridine(55) in tRNA</text>
        <dbReference type="Rhea" id="RHEA:42532"/>
        <dbReference type="Rhea" id="RHEA-COMP:10101"/>
        <dbReference type="Rhea" id="RHEA-COMP:10102"/>
        <dbReference type="ChEBI" id="CHEBI:65314"/>
        <dbReference type="ChEBI" id="CHEBI:65315"/>
        <dbReference type="EC" id="5.4.99.25"/>
    </reaction>
</comment>
<comment type="similarity">
    <text evidence="1">Belongs to the pseudouridine synthase TruB family. Type 1 subfamily.</text>
</comment>
<protein>
    <recommendedName>
        <fullName evidence="1">tRNA pseudouridine synthase B</fullName>
        <ecNumber evidence="1">5.4.99.25</ecNumber>
    </recommendedName>
    <alternativeName>
        <fullName evidence="1">tRNA pseudouridine(55) synthase</fullName>
        <shortName evidence="1">Psi55 synthase</shortName>
    </alternativeName>
    <alternativeName>
        <fullName evidence="1">tRNA pseudouridylate synthase</fullName>
    </alternativeName>
    <alternativeName>
        <fullName evidence="1">tRNA-uridine isomerase</fullName>
    </alternativeName>
</protein>
<evidence type="ECO:0000255" key="1">
    <source>
        <dbReference type="HAMAP-Rule" id="MF_01080"/>
    </source>
</evidence>
<proteinExistence type="inferred from homology"/>